<accession>Q30KJ2</accession>
<dbReference type="EMBL" id="DQ012090">
    <property type="protein sequence ID" value="AAY59818.1"/>
    <property type="molecule type" value="mRNA"/>
</dbReference>
<dbReference type="EMBL" id="BC168240">
    <property type="protein sequence ID" value="AAI68240.1"/>
    <property type="molecule type" value="mRNA"/>
</dbReference>
<dbReference type="RefSeq" id="NP_001032602.1">
    <property type="nucleotide sequence ID" value="NM_001037513.2"/>
</dbReference>
<dbReference type="STRING" id="10116.ENSRNOP00000041922"/>
<dbReference type="PaxDb" id="10116-ENSRNOP00000041922"/>
<dbReference type="Ensembl" id="ENSRNOT00000046156.5">
    <property type="protein sequence ID" value="ENSRNOP00000041922.3"/>
    <property type="gene ID" value="ENSRNOG00000033972.5"/>
</dbReference>
<dbReference type="GeneID" id="641639"/>
<dbReference type="KEGG" id="rno:641639"/>
<dbReference type="UCSC" id="RGD:1563282">
    <property type="organism name" value="rat"/>
</dbReference>
<dbReference type="AGR" id="RGD:1563282"/>
<dbReference type="CTD" id="387334"/>
<dbReference type="RGD" id="1563282">
    <property type="gene designation" value="Defb50"/>
</dbReference>
<dbReference type="GeneTree" id="ENSGT00520000061209"/>
<dbReference type="HOGENOM" id="CLU_2704193_0_0_1"/>
<dbReference type="InParanoid" id="Q30KJ2"/>
<dbReference type="OMA" id="KSVCCMV"/>
<dbReference type="OrthoDB" id="9612738at2759"/>
<dbReference type="PRO" id="PR:Q30KJ2"/>
<dbReference type="Proteomes" id="UP000002494">
    <property type="component" value="Chromosome 16"/>
</dbReference>
<dbReference type="Bgee" id="ENSRNOG00000033972">
    <property type="expression patterns" value="Expressed in thymus and 3 other cell types or tissues"/>
</dbReference>
<dbReference type="GO" id="GO:0005576">
    <property type="term" value="C:extracellular region"/>
    <property type="evidence" value="ECO:0007669"/>
    <property type="project" value="UniProtKB-SubCell"/>
</dbReference>
<dbReference type="GO" id="GO:0042742">
    <property type="term" value="P:defense response to bacterium"/>
    <property type="evidence" value="ECO:0007669"/>
    <property type="project" value="UniProtKB-KW"/>
</dbReference>
<dbReference type="InterPro" id="IPR035193">
    <property type="entry name" value="Defb50"/>
</dbReference>
<dbReference type="Pfam" id="PF17546">
    <property type="entry name" value="Defb50"/>
    <property type="match status" value="1"/>
</dbReference>
<feature type="signal peptide" evidence="2">
    <location>
        <begin position="1"/>
        <end position="23"/>
    </location>
</feature>
<feature type="chain" id="PRO_0000352718" description="Beta-defensin 50">
    <location>
        <begin position="24"/>
        <end position="73"/>
    </location>
</feature>
<feature type="disulfide bond" evidence="1">
    <location>
        <begin position="34"/>
        <end position="63"/>
    </location>
</feature>
<feature type="disulfide bond" evidence="1">
    <location>
        <begin position="46"/>
        <end position="64"/>
    </location>
</feature>
<protein>
    <recommendedName>
        <fullName>Beta-defensin 50</fullName>
        <shortName>BD-50</shortName>
    </recommendedName>
    <alternativeName>
        <fullName>Defensin, beta 50</fullName>
    </alternativeName>
</protein>
<sequence length="73" mass="7900">MKTLHLLLLISGLLSVFVKGVGSHPGTVHVRFKCIPKIAAVFGDNCPFYGNVDGLCNDKKSVCCMVPVRLDNI</sequence>
<comment type="function">
    <text evidence="1">Has bactericidal activity.</text>
</comment>
<comment type="subcellular location">
    <subcellularLocation>
        <location evidence="1">Secreted</location>
    </subcellularLocation>
</comment>
<comment type="similarity">
    <text evidence="3">Belongs to the beta-defensin family.</text>
</comment>
<name>DFB50_RAT</name>
<keyword id="KW-0044">Antibiotic</keyword>
<keyword id="KW-0929">Antimicrobial</keyword>
<keyword id="KW-0211">Defensin</keyword>
<keyword id="KW-1015">Disulfide bond</keyword>
<keyword id="KW-1185">Reference proteome</keyword>
<keyword id="KW-0964">Secreted</keyword>
<keyword id="KW-0732">Signal</keyword>
<evidence type="ECO:0000250" key="1"/>
<evidence type="ECO:0000255" key="2"/>
<evidence type="ECO:0000305" key="3"/>
<organism>
    <name type="scientific">Rattus norvegicus</name>
    <name type="common">Rat</name>
    <dbReference type="NCBI Taxonomy" id="10116"/>
    <lineage>
        <taxon>Eukaryota</taxon>
        <taxon>Metazoa</taxon>
        <taxon>Chordata</taxon>
        <taxon>Craniata</taxon>
        <taxon>Vertebrata</taxon>
        <taxon>Euteleostomi</taxon>
        <taxon>Mammalia</taxon>
        <taxon>Eutheria</taxon>
        <taxon>Euarchontoglires</taxon>
        <taxon>Glires</taxon>
        <taxon>Rodentia</taxon>
        <taxon>Myomorpha</taxon>
        <taxon>Muroidea</taxon>
        <taxon>Muridae</taxon>
        <taxon>Murinae</taxon>
        <taxon>Rattus</taxon>
    </lineage>
</organism>
<gene>
    <name type="primary">Defb50</name>
</gene>
<proteinExistence type="inferred from homology"/>
<reference key="1">
    <citation type="journal article" date="2005" name="Physiol. Genomics">
        <title>Cross-species analysis of the mammalian beta-defensin gene family: presence of syntenic gene clusters and preferential expression in the male reproductive tract.</title>
        <authorList>
            <person name="Patil A.A."/>
            <person name="Cai Y."/>
            <person name="Sang Y."/>
            <person name="Blecha F."/>
            <person name="Zhang G."/>
        </authorList>
    </citation>
    <scope>NUCLEOTIDE SEQUENCE [MRNA]</scope>
</reference>
<reference key="2">
    <citation type="journal article" date="2004" name="Genome Res.">
        <title>The status, quality, and expansion of the NIH full-length cDNA project: the Mammalian Gene Collection (MGC).</title>
        <authorList>
            <consortium name="The MGC Project Team"/>
        </authorList>
    </citation>
    <scope>NUCLEOTIDE SEQUENCE [LARGE SCALE MRNA]</scope>
    <source>
        <tissue>Prostate</tissue>
    </source>
</reference>